<keyword id="KW-0002">3D-structure</keyword>
<keyword id="KW-0007">Acetylation</keyword>
<keyword id="KW-0024">Alternative initiation</keyword>
<keyword id="KW-0963">Cytoplasm</keyword>
<keyword id="KW-0269">Exonuclease</keyword>
<keyword id="KW-0378">Hydrolase</keyword>
<keyword id="KW-0460">Magnesium</keyword>
<keyword id="KW-0464">Manganese</keyword>
<keyword id="KW-0479">Metal-binding</keyword>
<keyword id="KW-0496">Mitochondrion</keyword>
<keyword id="KW-0540">Nuclease</keyword>
<keyword id="KW-0539">Nucleus</keyword>
<keyword id="KW-0597">Phosphoprotein</keyword>
<keyword id="KW-1267">Proteomics identification</keyword>
<keyword id="KW-1185">Reference proteome</keyword>
<keyword id="KW-0809">Transit peptide</keyword>
<comment type="function">
    <text evidence="1 5 6 7 8">3'-to-5'exoribonuclease that preferentially degrades DNA and RNA oligonucleotides composed of only two nucleotides (PubMed:23741365, PubMed:30926754, PubMed:31588022, PubMed:32365187). Binds and degrades longer oligonucleotides with a lower affinity (PubMed:30926754, PubMed:31588022, PubMed:32365187). Plays dual roles in mitochondria, scavenging nanoRNAs (small RNA oligonucleotides of &lt;5 nucleotides) that are produced by the degradosome and clearing short RNAs that are generated by RNA processing (PubMed:30926754, PubMed:31588022, PubMed:32365187). Essential for correct initiation of mitochondrial transcription, degrading mitochondrial RNA dinucleotides to prevent RNA-primed transcription at non-canonical sites in the mitochondrial genome (PubMed:31588022). Essential for embryonic development (By similarity).</text>
</comment>
<comment type="function">
    <molecule>Isoform 3</molecule>
    <text evidence="3 4">3'-to-5'exoribonuclease that preferentially degrades DNA and RNA oligonucleotides composed of only two nucleotides.</text>
</comment>
<comment type="cofactor">
    <cofactor evidence="3">
        <name>Mn(2+)</name>
        <dbReference type="ChEBI" id="CHEBI:29035"/>
    </cofactor>
    <cofactor evidence="3 6 7">
        <name>Mg(2+)</name>
        <dbReference type="ChEBI" id="CHEBI:18420"/>
    </cofactor>
</comment>
<comment type="activity regulation">
    <molecule>Isoform 3</molecule>
    <text evidence="4">Inhibited by adenosine 3',5'-bisphosphate.</text>
</comment>
<comment type="biophysicochemical properties">
    <molecule>Isoform 3</molecule>
    <kinetics>
        <KM evidence="3">1.56 uM for RNA</KM>
        <KM evidence="3">1.51 uM for DNA</KM>
    </kinetics>
    <temperatureDependence>
        <text evidence="3">Optimum temperature is 50 degrees Celsius.</text>
    </temperatureDependence>
</comment>
<comment type="subunit">
    <text evidence="5 6 7 8">Homodimer (PubMed:30926754, PubMed:31588022, PubMed:32365187). Homotetramer (PubMed:23741365).</text>
</comment>
<comment type="subcellular location">
    <subcellularLocation>
        <location evidence="5">Mitochondrion intermembrane space</location>
    </subcellularLocation>
    <subcellularLocation>
        <location evidence="5">Mitochondrion matrix</location>
    </subcellularLocation>
    <subcellularLocation>
        <location evidence="8">Mitochondrion</location>
    </subcellularLocation>
    <subcellularLocation>
        <location evidence="5 8">Cytoplasm</location>
    </subcellularLocation>
    <subcellularLocation>
        <location evidence="8">Nucleus</location>
    </subcellularLocation>
</comment>
<comment type="subcellular location">
    <molecule>Isoform 3</molecule>
    <subcellularLocation>
        <location evidence="8">Cytoplasm</location>
    </subcellularLocation>
    <subcellularLocation>
        <location evidence="8">Nucleus</location>
    </subcellularLocation>
</comment>
<comment type="alternative products">
    <event type="alternative initiation"/>
    <isoform>
        <id>Q9Y3B8-1</id>
        <name>1</name>
        <name evidence="10">Sfn-alpha</name>
        <sequence type="displayed"/>
    </isoform>
    <isoform>
        <id>Q9Y3B8-2</id>
        <name>2</name>
        <sequence type="described" ref="VSP_003775"/>
    </isoform>
    <isoform>
        <id>Q9Y3B8-3</id>
        <name>3</name>
        <name evidence="10">Sfn</name>
        <sequence type="described" ref="VSP_054954"/>
    </isoform>
</comment>
<comment type="tissue specificity">
    <text evidence="3">Highly expressed in the heart and at lower levels in the lymph nodes, brain, lung, liver, spleen and thymus.</text>
</comment>
<comment type="developmental stage">
    <text evidence="3">Expressed in fetal liver, lung and kidney.</text>
</comment>
<comment type="similarity">
    <text evidence="11">Belongs to the oligoribonuclease family.</text>
</comment>
<evidence type="ECO:0000250" key="1">
    <source>
        <dbReference type="UniProtKB" id="Q9D8S4"/>
    </source>
</evidence>
<evidence type="ECO:0000255" key="2"/>
<evidence type="ECO:0000269" key="3">
    <source>
    </source>
</evidence>
<evidence type="ECO:0000269" key="4">
    <source>
    </source>
</evidence>
<evidence type="ECO:0000269" key="5">
    <source>
    </source>
</evidence>
<evidence type="ECO:0000269" key="6">
    <source>
    </source>
</evidence>
<evidence type="ECO:0000269" key="7">
    <source>
    </source>
</evidence>
<evidence type="ECO:0000269" key="8">
    <source>
    </source>
</evidence>
<evidence type="ECO:0000303" key="9">
    <source>
    </source>
</evidence>
<evidence type="ECO:0000303" key="10">
    <source>
    </source>
</evidence>
<evidence type="ECO:0000305" key="11"/>
<evidence type="ECO:0007744" key="12">
    <source>
        <dbReference type="PDB" id="6J7Y"/>
    </source>
</evidence>
<evidence type="ECO:0007744" key="13">
    <source>
        <dbReference type="PDB" id="6RCN"/>
    </source>
</evidence>
<evidence type="ECO:0007744" key="14">
    <source>
    </source>
</evidence>
<evidence type="ECO:0007744" key="15">
    <source>
    </source>
</evidence>
<evidence type="ECO:0007829" key="16">
    <source>
        <dbReference type="PDB" id="6N6J"/>
    </source>
</evidence>
<name>ORN_HUMAN</name>
<feature type="transit peptide" description="Mitochondrion" evidence="2">
    <location>
        <begin position="1"/>
        <end position="25"/>
    </location>
</feature>
<feature type="chain" id="PRO_0000020273" description="Oligoribonuclease, mitochondrial">
    <location>
        <begin position="26"/>
        <end position="237"/>
    </location>
</feature>
<feature type="domain" description="Exonuclease">
    <location>
        <begin position="43"/>
        <end position="207"/>
    </location>
</feature>
<feature type="active site" evidence="6 7">
    <location>
        <position position="194"/>
    </location>
</feature>
<feature type="binding site" evidence="6 7 12 13">
    <location>
        <position position="47"/>
    </location>
    <ligand>
        <name>Mg(2+)</name>
        <dbReference type="ChEBI" id="CHEBI:18420"/>
        <label>1</label>
    </ligand>
</feature>
<feature type="binding site" evidence="6 7 12 13">
    <location>
        <position position="47"/>
    </location>
    <ligand>
        <name>Mg(2+)</name>
        <dbReference type="ChEBI" id="CHEBI:18420"/>
        <label>2</label>
    </ligand>
</feature>
<feature type="binding site" evidence="6 7 12 13">
    <location>
        <position position="49"/>
    </location>
    <ligand>
        <name>Mg(2+)</name>
        <dbReference type="ChEBI" id="CHEBI:18420"/>
        <label>1</label>
    </ligand>
</feature>
<feature type="binding site" evidence="6 7 13">
    <location>
        <position position="147"/>
    </location>
    <ligand>
        <name>Mg(2+)</name>
        <dbReference type="ChEBI" id="CHEBI:18420"/>
        <label>2</label>
    </ligand>
</feature>
<feature type="binding site" evidence="6 12">
    <location>
        <position position="199"/>
    </location>
    <ligand>
        <name>Mg(2+)</name>
        <dbReference type="ChEBI" id="CHEBI:18420"/>
        <label>1</label>
    </ligand>
</feature>
<feature type="site" description="Important for dinucleotide binding" evidence="6 8">
    <location>
        <position position="53"/>
    </location>
</feature>
<feature type="site" description="Important for dinucleotide binding" evidence="6 8">
    <location>
        <position position="96"/>
    </location>
</feature>
<feature type="site" description="Important for dinucleotide binding" evidence="6 8">
    <location>
        <position position="164"/>
    </location>
</feature>
<feature type="modified residue" description="Phosphoserine" evidence="15">
    <location>
        <position position="92"/>
    </location>
</feature>
<feature type="modified residue" description="Phosphotyrosine" evidence="14">
    <location>
        <position position="122"/>
    </location>
</feature>
<feature type="modified residue" description="N6-acetyllysine" evidence="1">
    <location>
        <position position="173"/>
    </location>
</feature>
<feature type="splice variant" id="VSP_003775" description="In isoform 2." evidence="9">
    <location>
        <begin position="1"/>
        <end position="38"/>
    </location>
</feature>
<feature type="splice variant" id="VSP_054954" description="In isoform 3." evidence="11">
    <location>
        <begin position="1"/>
        <end position="32"/>
    </location>
</feature>
<feature type="mutagenesis site" description="Loss of 3'-to-5'exoribonuclease activity." evidence="7">
    <original>D</original>
    <variation>A</variation>
    <location>
        <position position="47"/>
    </location>
</feature>
<feature type="mutagenesis site" description="Loss of 3'-to-5'exoribonuclease activity." evidence="7 8">
    <original>E</original>
    <variation>A</variation>
    <location>
        <position position="49"/>
    </location>
</feature>
<feature type="mutagenesis site" description="Loss of 3'-to-5'exoribonuclease activity." evidence="8">
    <original>L</original>
    <variation>A</variation>
    <location>
        <position position="53"/>
    </location>
</feature>
<feature type="mutagenesis site" description="Loss of 3'-to-5'exoribonuclease activity." evidence="8">
    <original>W</original>
    <variation>A</variation>
    <location>
        <position position="96"/>
    </location>
</feature>
<feature type="mutagenesis site" description="No effect on 3'-to-5'exoribonuclease activity." evidence="8">
    <original>E</original>
    <variation>A</variation>
    <location>
        <position position="146"/>
    </location>
</feature>
<feature type="mutagenesis site" description="Loss of 3'-to-5'exoribonuclease activity." evidence="7 8">
    <original>D</original>
    <variation>A</variation>
    <location>
        <position position="147"/>
    </location>
</feature>
<feature type="mutagenesis site" description="Loss of 3'-to-5'exoribonuclease activity." evidence="8">
    <original>Y</original>
    <variation>A</variation>
    <location>
        <position position="164"/>
    </location>
</feature>
<feature type="mutagenesis site" description="Disruption of homodimerization and loss of 3'-to-5'exoribonuclease activity; when associated with R-179 or A-179." evidence="7">
    <original>R</original>
    <variation>A</variation>
    <location>
        <position position="178"/>
    </location>
</feature>
<feature type="mutagenesis site" description="Disruption of homodimerization and loss of 3'-to-5'exoribonuclease activity; when associated with A-178 or A-215." evidence="7 8">
    <original>W</original>
    <variation>A</variation>
    <location>
        <position position="179"/>
    </location>
</feature>
<feature type="mutagenesis site" description="Disruption of homodimerization and loss of 3'-to-5'exoribonuclease activity; when associated with A-178." evidence="7">
    <original>W</original>
    <variation>R</variation>
    <location>
        <position position="179"/>
    </location>
</feature>
<feature type="mutagenesis site" description="Loss of 3'-to-5'exoribonuclease activity." evidence="6 7">
    <original>H</original>
    <variation>A</variation>
    <location>
        <position position="194"/>
    </location>
</feature>
<feature type="mutagenesis site" description="Loss of 3'-to-5'exoribonuclease activity." evidence="6 7">
    <original>D</original>
    <variation>A</variation>
    <location>
        <position position="199"/>
    </location>
</feature>
<feature type="mutagenesis site" description="Disruption of homodimerization and loss of 3'-to-5'exoribonuclease activity; when associated with A-179." evidence="8">
    <original>F</original>
    <variation>A</variation>
    <location>
        <position position="215"/>
    </location>
</feature>
<feature type="sequence conflict" description="In Ref. 2; CAB53690 and 4; CAG38531." evidence="11" ref="2 4">
    <original>K</original>
    <variation>R</variation>
    <location>
        <position position="103"/>
    </location>
</feature>
<feature type="helix" evidence="16">
    <location>
        <begin position="37"/>
        <end position="40"/>
    </location>
</feature>
<feature type="strand" evidence="16">
    <location>
        <begin position="43"/>
        <end position="51"/>
    </location>
</feature>
<feature type="turn" evidence="16">
    <location>
        <begin position="55"/>
        <end position="57"/>
    </location>
</feature>
<feature type="strand" evidence="16">
    <location>
        <begin position="60"/>
        <end position="68"/>
    </location>
</feature>
<feature type="strand" evidence="16">
    <location>
        <begin position="74"/>
        <end position="82"/>
    </location>
</feature>
<feature type="helix" evidence="16">
    <location>
        <begin position="87"/>
        <end position="91"/>
    </location>
</feature>
<feature type="helix" evidence="16">
    <location>
        <begin position="95"/>
        <end position="103"/>
    </location>
</feature>
<feature type="helix" evidence="16">
    <location>
        <begin position="106"/>
        <end position="112"/>
    </location>
</feature>
<feature type="helix" evidence="16">
    <location>
        <begin position="117"/>
        <end position="131"/>
    </location>
</feature>
<feature type="turn" evidence="16">
    <location>
        <begin position="134"/>
        <end position="136"/>
    </location>
</feature>
<feature type="strand" evidence="16">
    <location>
        <begin position="139"/>
        <end position="141"/>
    </location>
</feature>
<feature type="helix" evidence="16">
    <location>
        <begin position="144"/>
        <end position="154"/>
    </location>
</feature>
<feature type="helix" evidence="16">
    <location>
        <begin position="156"/>
        <end position="160"/>
    </location>
</feature>
<feature type="strand" evidence="16">
    <location>
        <begin position="166"/>
        <end position="168"/>
    </location>
</feature>
<feature type="helix" evidence="16">
    <location>
        <begin position="169"/>
        <end position="179"/>
    </location>
</feature>
<feature type="helix" evidence="16">
    <location>
        <begin position="181"/>
        <end position="184"/>
    </location>
</feature>
<feature type="helix" evidence="16">
    <location>
        <begin position="196"/>
        <end position="214"/>
    </location>
</feature>
<feature type="helix" evidence="16">
    <location>
        <begin position="221"/>
        <end position="229"/>
    </location>
</feature>
<feature type="mutagenesis site" description="50% reduction in 3'-to-5'exoribonuclease activity." evidence="3">
    <original>D</original>
    <variation>A</variation>
    <location sequence="Q9Y3B8-3">
        <position position="136"/>
    </location>
</feature>
<proteinExistence type="evidence at protein level"/>
<organism>
    <name type="scientific">Homo sapiens</name>
    <name type="common">Human</name>
    <dbReference type="NCBI Taxonomy" id="9606"/>
    <lineage>
        <taxon>Eukaryota</taxon>
        <taxon>Metazoa</taxon>
        <taxon>Chordata</taxon>
        <taxon>Craniata</taxon>
        <taxon>Vertebrata</taxon>
        <taxon>Euteleostomi</taxon>
        <taxon>Mammalia</taxon>
        <taxon>Eutheria</taxon>
        <taxon>Euarchontoglires</taxon>
        <taxon>Primates</taxon>
        <taxon>Haplorrhini</taxon>
        <taxon>Catarrhini</taxon>
        <taxon>Hominidae</taxon>
        <taxon>Homo</taxon>
    </lineage>
</organism>
<dbReference type="EC" id="3.1.15.-"/>
<dbReference type="EMBL" id="AF151872">
    <property type="protein sequence ID" value="AAD34109.1"/>
    <property type="molecule type" value="mRNA"/>
</dbReference>
<dbReference type="EMBL" id="AL110239">
    <property type="protein sequence ID" value="CAB53690.1"/>
    <property type="molecule type" value="mRNA"/>
</dbReference>
<dbReference type="EMBL" id="AK312042">
    <property type="protein sequence ID" value="BAG34979.1"/>
    <property type="molecule type" value="mRNA"/>
</dbReference>
<dbReference type="EMBL" id="CR533500">
    <property type="protein sequence ID" value="CAG38531.1"/>
    <property type="molecule type" value="mRNA"/>
</dbReference>
<dbReference type="EMBL" id="AK223200">
    <property type="protein sequence ID" value="BAD96920.1"/>
    <property type="molecule type" value="mRNA"/>
</dbReference>
<dbReference type="EMBL" id="CH471065">
    <property type="protein sequence ID" value="EAW67250.1"/>
    <property type="molecule type" value="Genomic_DNA"/>
</dbReference>
<dbReference type="EMBL" id="BC105024">
    <property type="protein sequence ID" value="AAI05025.1"/>
    <property type="molecule type" value="mRNA"/>
</dbReference>
<dbReference type="EMBL" id="BC105026">
    <property type="protein sequence ID" value="AAI05027.1"/>
    <property type="molecule type" value="mRNA"/>
</dbReference>
<dbReference type="EMBL" id="BC107887">
    <property type="protein sequence ID" value="AAI07888.1"/>
    <property type="molecule type" value="mRNA"/>
</dbReference>
<dbReference type="EMBL" id="BC143701">
    <property type="protein sequence ID" value="AAI43702.1"/>
    <property type="molecule type" value="mRNA"/>
</dbReference>
<dbReference type="CCDS" id="CCDS8371.1">
    <molecule id="Q9Y3B8-1"/>
</dbReference>
<dbReference type="PIR" id="T14770">
    <property type="entry name" value="T14770"/>
</dbReference>
<dbReference type="RefSeq" id="NP_056338.2">
    <molecule id="Q9Y3B8-1"/>
    <property type="nucleotide sequence ID" value="NM_015523.4"/>
</dbReference>
<dbReference type="PDB" id="6J7Y">
    <property type="method" value="X-ray"/>
    <property type="resolution" value="2.20 A"/>
    <property type="chains" value="A/B=34-218"/>
</dbReference>
<dbReference type="PDB" id="6J7Z">
    <property type="method" value="X-ray"/>
    <property type="resolution" value="2.00 A"/>
    <property type="chains" value="A/B=33-218"/>
</dbReference>
<dbReference type="PDB" id="6J80">
    <property type="method" value="X-ray"/>
    <property type="resolution" value="1.81 A"/>
    <property type="chains" value="A/B=38-216"/>
</dbReference>
<dbReference type="PDB" id="6N6I">
    <property type="method" value="X-ray"/>
    <property type="resolution" value="1.43 A"/>
    <property type="chains" value="A/B=33-237"/>
</dbReference>
<dbReference type="PDB" id="6N6J">
    <property type="method" value="X-ray"/>
    <property type="resolution" value="1.32 A"/>
    <property type="chains" value="A/B=33-237"/>
</dbReference>
<dbReference type="PDB" id="6N6K">
    <property type="method" value="X-ray"/>
    <property type="resolution" value="1.42 A"/>
    <property type="chains" value="A/B=33-237"/>
</dbReference>
<dbReference type="PDB" id="6RCI">
    <property type="method" value="X-ray"/>
    <property type="resolution" value="2.00 A"/>
    <property type="chains" value="A/B=39-216"/>
</dbReference>
<dbReference type="PDB" id="6RCL">
    <property type="method" value="X-ray"/>
    <property type="resolution" value="1.97 A"/>
    <property type="chains" value="A/B=39-216"/>
</dbReference>
<dbReference type="PDB" id="6RCN">
    <property type="method" value="X-ray"/>
    <property type="resolution" value="2.25 A"/>
    <property type="chains" value="A/B=39-216"/>
</dbReference>
<dbReference type="PDB" id="6STY">
    <property type="method" value="X-ray"/>
    <property type="resolution" value="3.15 A"/>
    <property type="chains" value="A/B/D/E=1-237"/>
</dbReference>
<dbReference type="PDBsum" id="6J7Y"/>
<dbReference type="PDBsum" id="6J7Z"/>
<dbReference type="PDBsum" id="6J80"/>
<dbReference type="PDBsum" id="6N6I"/>
<dbReference type="PDBsum" id="6N6J"/>
<dbReference type="PDBsum" id="6N6K"/>
<dbReference type="PDBsum" id="6RCI"/>
<dbReference type="PDBsum" id="6RCL"/>
<dbReference type="PDBsum" id="6RCN"/>
<dbReference type="PDBsum" id="6STY"/>
<dbReference type="SMR" id="Q9Y3B8"/>
<dbReference type="BioGRID" id="117473">
    <property type="interactions" value="39"/>
</dbReference>
<dbReference type="FunCoup" id="Q9Y3B8">
    <property type="interactions" value="2612"/>
</dbReference>
<dbReference type="STRING" id="9606.ENSP00000480535"/>
<dbReference type="GlyGen" id="Q9Y3B8">
    <property type="glycosylation" value="1 site, 1 O-linked glycan (1 site)"/>
</dbReference>
<dbReference type="iPTMnet" id="Q9Y3B8"/>
<dbReference type="MetOSite" id="Q9Y3B8"/>
<dbReference type="PhosphoSitePlus" id="Q9Y3B8"/>
<dbReference type="SwissPalm" id="Q9Y3B8"/>
<dbReference type="BioMuta" id="REXO2"/>
<dbReference type="DMDM" id="116242694"/>
<dbReference type="jPOST" id="Q9Y3B8"/>
<dbReference type="MassIVE" id="Q9Y3B8"/>
<dbReference type="PaxDb" id="9606-ENSP00000265881"/>
<dbReference type="PeptideAtlas" id="Q9Y3B8"/>
<dbReference type="ProteomicsDB" id="86006">
    <molecule id="Q9Y3B8-1"/>
</dbReference>
<dbReference type="ProteomicsDB" id="86007">
    <molecule id="Q9Y3B8-2"/>
</dbReference>
<dbReference type="Pumba" id="Q9Y3B8"/>
<dbReference type="Antibodypedia" id="32246">
    <property type="antibodies" value="169 antibodies from 24 providers"/>
</dbReference>
<dbReference type="DNASU" id="25996"/>
<dbReference type="Ensembl" id="ENST00000265881.10">
    <molecule id="Q9Y3B8-1"/>
    <property type="protein sequence ID" value="ENSP00000265881.5"/>
    <property type="gene ID" value="ENSG00000076043.11"/>
</dbReference>
<dbReference type="GeneID" id="25996"/>
<dbReference type="KEGG" id="hsa:25996"/>
<dbReference type="MANE-Select" id="ENST00000265881.10">
    <property type="protein sequence ID" value="ENSP00000265881.5"/>
    <property type="RefSeq nucleotide sequence ID" value="NM_015523.4"/>
    <property type="RefSeq protein sequence ID" value="NP_056338.2"/>
</dbReference>
<dbReference type="UCSC" id="uc001poy.4">
    <molecule id="Q9Y3B8-1"/>
    <property type="organism name" value="human"/>
</dbReference>
<dbReference type="AGR" id="HGNC:17851"/>
<dbReference type="CTD" id="25996"/>
<dbReference type="DisGeNET" id="25996"/>
<dbReference type="GeneCards" id="REXO2"/>
<dbReference type="HGNC" id="HGNC:17851">
    <property type="gene designation" value="REXO2"/>
</dbReference>
<dbReference type="HPA" id="ENSG00000076043">
    <property type="expression patterns" value="Low tissue specificity"/>
</dbReference>
<dbReference type="MIM" id="607149">
    <property type="type" value="gene"/>
</dbReference>
<dbReference type="neXtProt" id="NX_Q9Y3B8"/>
<dbReference type="OpenTargets" id="ENSG00000076043"/>
<dbReference type="PharmGKB" id="PA142671085"/>
<dbReference type="VEuPathDB" id="HostDB:ENSG00000076043"/>
<dbReference type="eggNOG" id="KOG3242">
    <property type="taxonomic scope" value="Eukaryota"/>
</dbReference>
<dbReference type="GeneTree" id="ENSGT00390000009255"/>
<dbReference type="InParanoid" id="Q9Y3B8"/>
<dbReference type="OMA" id="AFFHYRN"/>
<dbReference type="OrthoDB" id="270189at2759"/>
<dbReference type="PAN-GO" id="Q9Y3B8">
    <property type="GO annotations" value="2 GO annotations based on evolutionary models"/>
</dbReference>
<dbReference type="PhylomeDB" id="Q9Y3B8"/>
<dbReference type="TreeFam" id="TF314084"/>
<dbReference type="BRENDA" id="3.1.13.3">
    <property type="organism ID" value="2681"/>
</dbReference>
<dbReference type="PathwayCommons" id="Q9Y3B8"/>
<dbReference type="Reactome" id="R-HSA-9836573">
    <property type="pathway name" value="Mitochondrial RNA degradation"/>
</dbReference>
<dbReference type="BioGRID-ORCS" id="25996">
    <property type="hits" value="172 hits in 1176 CRISPR screens"/>
</dbReference>
<dbReference type="ChiTaRS" id="REXO2">
    <property type="organism name" value="human"/>
</dbReference>
<dbReference type="GeneWiki" id="REXO2"/>
<dbReference type="GenomeRNAi" id="25996"/>
<dbReference type="Pharos" id="Q9Y3B8">
    <property type="development level" value="Tbio"/>
</dbReference>
<dbReference type="PRO" id="PR:Q9Y3B8"/>
<dbReference type="Proteomes" id="UP000005640">
    <property type="component" value="Chromosome 11"/>
</dbReference>
<dbReference type="RNAct" id="Q9Y3B8">
    <property type="molecule type" value="protein"/>
</dbReference>
<dbReference type="Bgee" id="ENSG00000076043">
    <property type="expression patterns" value="Expressed in secondary oocyte and 202 other cell types or tissues"/>
</dbReference>
<dbReference type="ExpressionAtlas" id="Q9Y3B8">
    <property type="expression patterns" value="baseline and differential"/>
</dbReference>
<dbReference type="GO" id="GO:0005737">
    <property type="term" value="C:cytoplasm"/>
    <property type="evidence" value="ECO:0000314"/>
    <property type="project" value="UniProtKB"/>
</dbReference>
<dbReference type="GO" id="GO:0005925">
    <property type="term" value="C:focal adhesion"/>
    <property type="evidence" value="ECO:0000314"/>
    <property type="project" value="HPA"/>
</dbReference>
<dbReference type="GO" id="GO:0005758">
    <property type="term" value="C:mitochondrial intermembrane space"/>
    <property type="evidence" value="ECO:0000314"/>
    <property type="project" value="UniProtKB"/>
</dbReference>
<dbReference type="GO" id="GO:0005759">
    <property type="term" value="C:mitochondrial matrix"/>
    <property type="evidence" value="ECO:0000314"/>
    <property type="project" value="UniProtKB"/>
</dbReference>
<dbReference type="GO" id="GO:0005739">
    <property type="term" value="C:mitochondrion"/>
    <property type="evidence" value="ECO:0000314"/>
    <property type="project" value="HPA"/>
</dbReference>
<dbReference type="GO" id="GO:0005730">
    <property type="term" value="C:nucleolus"/>
    <property type="evidence" value="ECO:0000314"/>
    <property type="project" value="HPA"/>
</dbReference>
<dbReference type="GO" id="GO:0005634">
    <property type="term" value="C:nucleus"/>
    <property type="evidence" value="ECO:0000314"/>
    <property type="project" value="UniProtKB"/>
</dbReference>
<dbReference type="GO" id="GO:0008408">
    <property type="term" value="F:3'-5' exonuclease activity"/>
    <property type="evidence" value="ECO:0000314"/>
    <property type="project" value="MGI"/>
</dbReference>
<dbReference type="GO" id="GO:0008296">
    <property type="term" value="F:3'-5'-DNA exonuclease activity"/>
    <property type="evidence" value="ECO:0000314"/>
    <property type="project" value="UniProtKB"/>
</dbReference>
<dbReference type="GO" id="GO:0000175">
    <property type="term" value="F:3'-5'-RNA exonuclease activity"/>
    <property type="evidence" value="ECO:0000314"/>
    <property type="project" value="UniProtKB"/>
</dbReference>
<dbReference type="GO" id="GO:0000287">
    <property type="term" value="F:magnesium ion binding"/>
    <property type="evidence" value="ECO:0000314"/>
    <property type="project" value="UniProtKB"/>
</dbReference>
<dbReference type="GO" id="GO:0003676">
    <property type="term" value="F:nucleic acid binding"/>
    <property type="evidence" value="ECO:0007669"/>
    <property type="project" value="InterPro"/>
</dbReference>
<dbReference type="GO" id="GO:0006139">
    <property type="term" value="P:nucleobase-containing compound metabolic process"/>
    <property type="evidence" value="ECO:0000314"/>
    <property type="project" value="MGI"/>
</dbReference>
<dbReference type="GO" id="GO:0009117">
    <property type="term" value="P:nucleotide metabolic process"/>
    <property type="evidence" value="ECO:0000304"/>
    <property type="project" value="ProtInc"/>
</dbReference>
<dbReference type="CDD" id="cd06135">
    <property type="entry name" value="Orn"/>
    <property type="match status" value="1"/>
</dbReference>
<dbReference type="FunFam" id="3.30.420.10:FF:000003">
    <property type="entry name" value="Oligoribonuclease"/>
    <property type="match status" value="1"/>
</dbReference>
<dbReference type="Gene3D" id="3.30.420.10">
    <property type="entry name" value="Ribonuclease H-like superfamily/Ribonuclease H"/>
    <property type="match status" value="1"/>
</dbReference>
<dbReference type="HAMAP" id="MF_00045">
    <property type="entry name" value="Oligoribonuclease"/>
    <property type="match status" value="1"/>
</dbReference>
<dbReference type="InterPro" id="IPR013520">
    <property type="entry name" value="Exonuclease_RNaseT/DNA_pol3"/>
</dbReference>
<dbReference type="InterPro" id="IPR022894">
    <property type="entry name" value="Oligoribonuclease"/>
</dbReference>
<dbReference type="InterPro" id="IPR012337">
    <property type="entry name" value="RNaseH-like_sf"/>
</dbReference>
<dbReference type="InterPro" id="IPR036397">
    <property type="entry name" value="RNaseH_sf"/>
</dbReference>
<dbReference type="NCBIfam" id="NF003765">
    <property type="entry name" value="PRK05359.1"/>
    <property type="match status" value="1"/>
</dbReference>
<dbReference type="PANTHER" id="PTHR11046">
    <property type="entry name" value="OLIGORIBONUCLEASE, MITOCHONDRIAL"/>
    <property type="match status" value="1"/>
</dbReference>
<dbReference type="PANTHER" id="PTHR11046:SF0">
    <property type="entry name" value="OLIGORIBONUCLEASE, MITOCHONDRIAL"/>
    <property type="match status" value="1"/>
</dbReference>
<dbReference type="Pfam" id="PF00929">
    <property type="entry name" value="RNase_T"/>
    <property type="match status" value="1"/>
</dbReference>
<dbReference type="SMART" id="SM00479">
    <property type="entry name" value="EXOIII"/>
    <property type="match status" value="1"/>
</dbReference>
<dbReference type="SUPFAM" id="SSF53098">
    <property type="entry name" value="Ribonuclease H-like"/>
    <property type="match status" value="1"/>
</dbReference>
<gene>
    <name type="primary">REXO2</name>
    <name type="synonym">SFN</name>
    <name type="synonym">SMFN</name>
    <name type="ORF">CGI-114</name>
</gene>
<accession>Q9Y3B8</accession>
<accession>B2R532</accession>
<accession>Q32Q18</accession>
<accession>Q53FT1</accession>
<accession>Q6FIC6</accession>
<accession>Q9UFY7</accession>
<reference key="1">
    <citation type="journal article" date="2000" name="Genome Res.">
        <title>Identification of novel human genes evolutionarily conserved in Caenorhabditis elegans by comparative proteomics.</title>
        <authorList>
            <person name="Lai C.-H."/>
            <person name="Chou C.-Y."/>
            <person name="Ch'ang L.-Y."/>
            <person name="Liu C.-S."/>
            <person name="Lin W.-C."/>
        </authorList>
    </citation>
    <scope>NUCLEOTIDE SEQUENCE [LARGE SCALE MRNA] (ISOFORM 2)</scope>
</reference>
<reference key="2">
    <citation type="journal article" date="2001" name="Genome Res.">
        <title>Towards a catalog of human genes and proteins: sequencing and analysis of 500 novel complete protein coding human cDNAs.</title>
        <authorList>
            <person name="Wiemann S."/>
            <person name="Weil B."/>
            <person name="Wellenreuther R."/>
            <person name="Gassenhuber J."/>
            <person name="Glassl S."/>
            <person name="Ansorge W."/>
            <person name="Boecher M."/>
            <person name="Bloecker H."/>
            <person name="Bauersachs S."/>
            <person name="Blum H."/>
            <person name="Lauber J."/>
            <person name="Duesterhoeft A."/>
            <person name="Beyer A."/>
            <person name="Koehrer K."/>
            <person name="Strack N."/>
            <person name="Mewes H.-W."/>
            <person name="Ottenwaelder B."/>
            <person name="Obermaier B."/>
            <person name="Tampe J."/>
            <person name="Heubner D."/>
            <person name="Wambutt R."/>
            <person name="Korn B."/>
            <person name="Klein M."/>
            <person name="Poustka A."/>
        </authorList>
    </citation>
    <scope>NUCLEOTIDE SEQUENCE [LARGE SCALE MRNA] (ISOFORM 1)</scope>
    <source>
        <tissue>Kidney</tissue>
    </source>
</reference>
<reference key="3">
    <citation type="journal article" date="2004" name="Nat. Genet.">
        <title>Complete sequencing and characterization of 21,243 full-length human cDNAs.</title>
        <authorList>
            <person name="Ota T."/>
            <person name="Suzuki Y."/>
            <person name="Nishikawa T."/>
            <person name="Otsuki T."/>
            <person name="Sugiyama T."/>
            <person name="Irie R."/>
            <person name="Wakamatsu A."/>
            <person name="Hayashi K."/>
            <person name="Sato H."/>
            <person name="Nagai K."/>
            <person name="Kimura K."/>
            <person name="Makita H."/>
            <person name="Sekine M."/>
            <person name="Obayashi M."/>
            <person name="Nishi T."/>
            <person name="Shibahara T."/>
            <person name="Tanaka T."/>
            <person name="Ishii S."/>
            <person name="Yamamoto J."/>
            <person name="Saito K."/>
            <person name="Kawai Y."/>
            <person name="Isono Y."/>
            <person name="Nakamura Y."/>
            <person name="Nagahari K."/>
            <person name="Murakami K."/>
            <person name="Yasuda T."/>
            <person name="Iwayanagi T."/>
            <person name="Wagatsuma M."/>
            <person name="Shiratori A."/>
            <person name="Sudo H."/>
            <person name="Hosoiri T."/>
            <person name="Kaku Y."/>
            <person name="Kodaira H."/>
            <person name="Kondo H."/>
            <person name="Sugawara M."/>
            <person name="Takahashi M."/>
            <person name="Kanda K."/>
            <person name="Yokoi T."/>
            <person name="Furuya T."/>
            <person name="Kikkawa E."/>
            <person name="Omura Y."/>
            <person name="Abe K."/>
            <person name="Kamihara K."/>
            <person name="Katsuta N."/>
            <person name="Sato K."/>
            <person name="Tanikawa M."/>
            <person name="Yamazaki M."/>
            <person name="Ninomiya K."/>
            <person name="Ishibashi T."/>
            <person name="Yamashita H."/>
            <person name="Murakawa K."/>
            <person name="Fujimori K."/>
            <person name="Tanai H."/>
            <person name="Kimata M."/>
            <person name="Watanabe M."/>
            <person name="Hiraoka S."/>
            <person name="Chiba Y."/>
            <person name="Ishida S."/>
            <person name="Ono Y."/>
            <person name="Takiguchi S."/>
            <person name="Watanabe S."/>
            <person name="Yosida M."/>
            <person name="Hotuta T."/>
            <person name="Kusano J."/>
            <person name="Kanehori K."/>
            <person name="Takahashi-Fujii A."/>
            <person name="Hara H."/>
            <person name="Tanase T.-O."/>
            <person name="Nomura Y."/>
            <person name="Togiya S."/>
            <person name="Komai F."/>
            <person name="Hara R."/>
            <person name="Takeuchi K."/>
            <person name="Arita M."/>
            <person name="Imose N."/>
            <person name="Musashino K."/>
            <person name="Yuuki H."/>
            <person name="Oshima A."/>
            <person name="Sasaki N."/>
            <person name="Aotsuka S."/>
            <person name="Yoshikawa Y."/>
            <person name="Matsunawa H."/>
            <person name="Ichihara T."/>
            <person name="Shiohata N."/>
            <person name="Sano S."/>
            <person name="Moriya S."/>
            <person name="Momiyama H."/>
            <person name="Satoh N."/>
            <person name="Takami S."/>
            <person name="Terashima Y."/>
            <person name="Suzuki O."/>
            <person name="Nakagawa S."/>
            <person name="Senoh A."/>
            <person name="Mizoguchi H."/>
            <person name="Goto Y."/>
            <person name="Shimizu F."/>
            <person name="Wakebe H."/>
            <person name="Hishigaki H."/>
            <person name="Watanabe T."/>
            <person name="Sugiyama A."/>
            <person name="Takemoto M."/>
            <person name="Kawakami B."/>
            <person name="Yamazaki M."/>
            <person name="Watanabe K."/>
            <person name="Kumagai A."/>
            <person name="Itakura S."/>
            <person name="Fukuzumi Y."/>
            <person name="Fujimori Y."/>
            <person name="Komiyama M."/>
            <person name="Tashiro H."/>
            <person name="Tanigami A."/>
            <person name="Fujiwara T."/>
            <person name="Ono T."/>
            <person name="Yamada K."/>
            <person name="Fujii Y."/>
            <person name="Ozaki K."/>
            <person name="Hirao M."/>
            <person name="Ohmori Y."/>
            <person name="Kawabata A."/>
            <person name="Hikiji T."/>
            <person name="Kobatake N."/>
            <person name="Inagaki H."/>
            <person name="Ikema Y."/>
            <person name="Okamoto S."/>
            <person name="Okitani R."/>
            <person name="Kawakami T."/>
            <person name="Noguchi S."/>
            <person name="Itoh T."/>
            <person name="Shigeta K."/>
            <person name="Senba T."/>
            <person name="Matsumura K."/>
            <person name="Nakajima Y."/>
            <person name="Mizuno T."/>
            <person name="Morinaga M."/>
            <person name="Sasaki M."/>
            <person name="Togashi T."/>
            <person name="Oyama M."/>
            <person name="Hata H."/>
            <person name="Watanabe M."/>
            <person name="Komatsu T."/>
            <person name="Mizushima-Sugano J."/>
            <person name="Satoh T."/>
            <person name="Shirai Y."/>
            <person name="Takahashi Y."/>
            <person name="Nakagawa K."/>
            <person name="Okumura K."/>
            <person name="Nagase T."/>
            <person name="Nomura N."/>
            <person name="Kikuchi H."/>
            <person name="Masuho Y."/>
            <person name="Yamashita R."/>
            <person name="Nakai K."/>
            <person name="Yada T."/>
            <person name="Nakamura Y."/>
            <person name="Ohara O."/>
            <person name="Isogai T."/>
            <person name="Sugano S."/>
        </authorList>
    </citation>
    <scope>NUCLEOTIDE SEQUENCE [LARGE SCALE MRNA] (ISOFORM 1)</scope>
    <source>
        <tissue>Skeletal muscle</tissue>
    </source>
</reference>
<reference key="4">
    <citation type="submission" date="2004-06" db="EMBL/GenBank/DDBJ databases">
        <title>Cloning of human full open reading frames in Gateway(TM) system entry vector (pDONR201).</title>
        <authorList>
            <person name="Ebert L."/>
            <person name="Schick M."/>
            <person name="Neubert P."/>
            <person name="Schatten R."/>
            <person name="Henze S."/>
            <person name="Korn B."/>
        </authorList>
    </citation>
    <scope>NUCLEOTIDE SEQUENCE [LARGE SCALE MRNA] (ISOFORM 1)</scope>
</reference>
<reference key="5">
    <citation type="submission" date="2005-04" db="EMBL/GenBank/DDBJ databases">
        <authorList>
            <person name="Suzuki Y."/>
            <person name="Sugano S."/>
            <person name="Totoki Y."/>
            <person name="Toyoda A."/>
            <person name="Takeda T."/>
            <person name="Sakaki Y."/>
            <person name="Tanaka A."/>
            <person name="Yokoyama S."/>
        </authorList>
    </citation>
    <scope>NUCLEOTIDE SEQUENCE [LARGE SCALE MRNA] (ISOFORM 1)</scope>
    <source>
        <tissue>Kidney proximal tubule</tissue>
    </source>
</reference>
<reference key="6">
    <citation type="submission" date="2005-07" db="EMBL/GenBank/DDBJ databases">
        <authorList>
            <person name="Mural R.J."/>
            <person name="Istrail S."/>
            <person name="Sutton G."/>
            <person name="Florea L."/>
            <person name="Halpern A.L."/>
            <person name="Mobarry C.M."/>
            <person name="Lippert R."/>
            <person name="Walenz B."/>
            <person name="Shatkay H."/>
            <person name="Dew I."/>
            <person name="Miller J.R."/>
            <person name="Flanigan M.J."/>
            <person name="Edwards N.J."/>
            <person name="Bolanos R."/>
            <person name="Fasulo D."/>
            <person name="Halldorsson B.V."/>
            <person name="Hannenhalli S."/>
            <person name="Turner R."/>
            <person name="Yooseph S."/>
            <person name="Lu F."/>
            <person name="Nusskern D.R."/>
            <person name="Shue B.C."/>
            <person name="Zheng X.H."/>
            <person name="Zhong F."/>
            <person name="Delcher A.L."/>
            <person name="Huson D.H."/>
            <person name="Kravitz S.A."/>
            <person name="Mouchard L."/>
            <person name="Reinert K."/>
            <person name="Remington K.A."/>
            <person name="Clark A.G."/>
            <person name="Waterman M.S."/>
            <person name="Eichler E.E."/>
            <person name="Adams M.D."/>
            <person name="Hunkapiller M.W."/>
            <person name="Myers E.W."/>
            <person name="Venter J.C."/>
        </authorList>
    </citation>
    <scope>NUCLEOTIDE SEQUENCE [LARGE SCALE GENOMIC DNA]</scope>
</reference>
<reference key="7">
    <citation type="journal article" date="2004" name="Genome Res.">
        <title>The status, quality, and expansion of the NIH full-length cDNA project: the Mammalian Gene Collection (MGC).</title>
        <authorList>
            <consortium name="The MGC Project Team"/>
        </authorList>
    </citation>
    <scope>NUCLEOTIDE SEQUENCE [LARGE SCALE MRNA] (ISOFORM 1)</scope>
    <source>
        <tissue>Brain</tissue>
        <tissue>Placenta</tissue>
    </source>
</reference>
<reference key="8">
    <citation type="journal article" date="2000" name="J. Biol. Chem.">
        <title>The human homolog of Escherichia coli Orn degrades small single-stranded RNA and DNA oligomers.</title>
        <authorList>
            <person name="Nguyen L.H."/>
            <person name="Erzberger J.P."/>
            <person name="Root J."/>
            <person name="Wilson D.M. III"/>
        </authorList>
    </citation>
    <scope>FUNCTION (ISOFORM 3)</scope>
    <scope>BIOPHYSICOCHEMICAL PROPERTIES (ISOFORM 3)</scope>
    <scope>COFACTOR (ISOFORM 3)</scope>
    <scope>TISSUE SPECIFICITY</scope>
    <scope>DEVELOPMENTAL STAGE</scope>
    <scope>MUTAGENESIS OF ASP-136 (ISOFORM 3)</scope>
    <scope>CATALYTIC ACTIVITY (ISOFORM 3)</scope>
</reference>
<reference key="9">
    <citation type="journal article" date="2005" name="Nat. Biotechnol.">
        <title>Immunoaffinity profiling of tyrosine phosphorylation in cancer cells.</title>
        <authorList>
            <person name="Rush J."/>
            <person name="Moritz A."/>
            <person name="Lee K.A."/>
            <person name="Guo A."/>
            <person name="Goss V.L."/>
            <person name="Spek E.J."/>
            <person name="Zhang H."/>
            <person name="Zha X.-M."/>
            <person name="Polakiewicz R.D."/>
            <person name="Comb M.J."/>
        </authorList>
    </citation>
    <scope>PHOSPHORYLATION [LARGE SCALE ANALYSIS] AT TYR-122</scope>
    <scope>IDENTIFICATION BY MASS SPECTROMETRY [LARGE SCALE ANALYSIS]</scope>
</reference>
<reference key="10">
    <citation type="journal article" date="2006" name="Nucleic Acids Res.">
        <title>Oligoribonuclease is a common downstream target of lithium-induced pAp accumulation in Escherichia coli and human cells.</title>
        <authorList>
            <person name="Mechold U."/>
            <person name="Ogryzko V."/>
            <person name="Ngo S."/>
            <person name="Danchin A."/>
        </authorList>
    </citation>
    <scope>FUNCTION (ISOFORM 3)</scope>
    <scope>ACTIVITY REGULATION (ISOFORM 3)</scope>
    <scope>CATALYTIC ACTIVITY (ISOFORM 3)</scope>
</reference>
<reference key="11">
    <citation type="journal article" date="2011" name="BMC Syst. Biol.">
        <title>Initial characterization of the human central proteome.</title>
        <authorList>
            <person name="Burkard T.R."/>
            <person name="Planyavsky M."/>
            <person name="Kaupe I."/>
            <person name="Breitwieser F.P."/>
            <person name="Buerckstuemmer T."/>
            <person name="Bennett K.L."/>
            <person name="Superti-Furga G."/>
            <person name="Colinge J."/>
        </authorList>
    </citation>
    <scope>IDENTIFICATION BY MASS SPECTROMETRY [LARGE SCALE ANALYSIS]</scope>
</reference>
<reference key="12">
    <citation type="journal article" date="2012" name="Proc. Natl. Acad. Sci. U.S.A.">
        <title>N-terminal acetylome analyses and functional insights of the N-terminal acetyltransferase NatB.</title>
        <authorList>
            <person name="Van Damme P."/>
            <person name="Lasa M."/>
            <person name="Polevoda B."/>
            <person name="Gazquez C."/>
            <person name="Elosegui-Artola A."/>
            <person name="Kim D.S."/>
            <person name="De Juan-Pardo E."/>
            <person name="Demeyer K."/>
            <person name="Hole K."/>
            <person name="Larrea E."/>
            <person name="Timmerman E."/>
            <person name="Prieto J."/>
            <person name="Arnesen T."/>
            <person name="Sherman F."/>
            <person name="Gevaert K."/>
            <person name="Aldabe R."/>
        </authorList>
    </citation>
    <scope>IDENTIFICATION BY MASS SPECTROMETRY [LARGE SCALE ANALYSIS]</scope>
</reference>
<reference key="13">
    <citation type="journal article" date="2013" name="J. Proteome Res.">
        <title>Toward a comprehensive characterization of a human cancer cell phosphoproteome.</title>
        <authorList>
            <person name="Zhou H."/>
            <person name="Di Palma S."/>
            <person name="Preisinger C."/>
            <person name="Peng M."/>
            <person name="Polat A.N."/>
            <person name="Heck A.J."/>
            <person name="Mohammed S."/>
        </authorList>
    </citation>
    <scope>IDENTIFICATION BY MASS SPECTROMETRY [LARGE SCALE ANALYSIS]</scope>
    <source>
        <tissue>Erythroleukemia</tissue>
    </source>
</reference>
<reference key="14">
    <citation type="journal article" date="2013" name="PLoS ONE">
        <title>REXO2 is an oligoribonuclease active in human mitochondria.</title>
        <authorList>
            <person name="Bruni F."/>
            <person name="Gramegna P."/>
            <person name="Oliveira J.M."/>
            <person name="Lightowlers R.N."/>
            <person name="Chrzanowska-Lightowlers Z.M."/>
        </authorList>
    </citation>
    <scope>FUNCTION</scope>
    <scope>SUBCELLULAR LOCATION</scope>
    <scope>ALTERNATIVE INITIATION (ISOFORM 3)</scope>
    <scope>SUBUNIT</scope>
    <scope>CATALYTIC ACTIVITY</scope>
</reference>
<reference key="15">
    <citation type="journal article" date="2014" name="J. Proteomics">
        <title>An enzyme assisted RP-RPLC approach for in-depth analysis of human liver phosphoproteome.</title>
        <authorList>
            <person name="Bian Y."/>
            <person name="Song C."/>
            <person name="Cheng K."/>
            <person name="Dong M."/>
            <person name="Wang F."/>
            <person name="Huang J."/>
            <person name="Sun D."/>
            <person name="Wang L."/>
            <person name="Ye M."/>
            <person name="Zou H."/>
        </authorList>
    </citation>
    <scope>PHOSPHORYLATION [LARGE SCALE ANALYSIS] AT SER-92</scope>
    <scope>IDENTIFICATION BY MASS SPECTROMETRY [LARGE SCALE ANALYSIS]</scope>
    <source>
        <tissue>Liver</tissue>
    </source>
</reference>
<reference key="16">
    <citation type="journal article" date="2014" name="Mol. Cell. Proteomics">
        <title>Immunoaffinity enrichment and mass spectrometry analysis of protein methylation.</title>
        <authorList>
            <person name="Guo A."/>
            <person name="Gu H."/>
            <person name="Zhou J."/>
            <person name="Mulhern D."/>
            <person name="Wang Y."/>
            <person name="Lee K.A."/>
            <person name="Yang V."/>
            <person name="Aguiar M."/>
            <person name="Kornhauser J."/>
            <person name="Jia X."/>
            <person name="Ren J."/>
            <person name="Beausoleil S.A."/>
            <person name="Silva J.C."/>
            <person name="Vemulapalli V."/>
            <person name="Bedford M.T."/>
            <person name="Comb M.J."/>
        </authorList>
    </citation>
    <scope>IDENTIFICATION BY MASS SPECTROMETRY [LARGE SCALE ANALYSIS]</scope>
    <source>
        <tissue>Colon carcinoma</tissue>
    </source>
</reference>
<reference key="17">
    <citation type="journal article" date="2015" name="Proteomics">
        <title>N-terminome analysis of the human mitochondrial proteome.</title>
        <authorList>
            <person name="Vaca Jacome A.S."/>
            <person name="Rabilloud T."/>
            <person name="Schaeffer-Reiss C."/>
            <person name="Rompais M."/>
            <person name="Ayoub D."/>
            <person name="Lane L."/>
            <person name="Bairoch A."/>
            <person name="Van Dorsselaer A."/>
            <person name="Carapito C."/>
        </authorList>
    </citation>
    <scope>IDENTIFICATION BY MASS SPECTROMETRY [LARGE SCALE ANALYSIS]</scope>
</reference>
<reference key="18">
    <citation type="journal article" date="2019" name="Mol. Cell">
        <title>Dinucleotide Degradation by REXO2 Maintains Promoter Specificity in Mammalian Mitochondria.</title>
        <authorList>
            <person name="Nicholls T.J."/>
            <person name="Spahr H."/>
            <person name="Jiang S."/>
            <person name="Siira S.J."/>
            <person name="Koolmeister C."/>
            <person name="Sharma S."/>
            <person name="Kauppila J.H.K."/>
            <person name="Jiang M."/>
            <person name="Kaever V."/>
            <person name="Rackham O."/>
            <person name="Chabes A."/>
            <person name="Falkenberg M."/>
            <person name="Filipovska A."/>
            <person name="Larsson N.G."/>
            <person name="Gustafsson C.M."/>
        </authorList>
    </citation>
    <scope>X-RAY CRYSTALLOGRAPHY (1.97 ANGSTROMS) OF 39-216 OF WILD-TYPE AND MUTANT HIS-199 IN COMPLEX WITH PAPA AND DADA</scope>
    <scope>FUNCTION</scope>
    <scope>CATALYTIC ACTIVITY</scope>
    <scope>SUBUNIT</scope>
    <scope>MUTAGENESIS OF ASP-47; GLU-49; ASP-147; ARG-178; TRP-179; HIS-194 AND ASP-199</scope>
    <scope>METAL-BINDING SITES</scope>
    <scope>COFACTOR</scope>
    <scope>ACTIVE SITE</scope>
</reference>
<reference key="19">
    <citation type="journal article" date="2019" name="RNA">
        <title>Structural insights into nanoRNA degradation by human Rexo2.</title>
        <authorList>
            <person name="Chu L.Y."/>
            <person name="Agrawal S."/>
            <person name="Chen Y.P."/>
            <person name="Yang W.Z."/>
            <person name="Yuan H.S."/>
        </authorList>
    </citation>
    <scope>X-RAY CRYSTALLOGRAPHY (1.81 ANGSTROMS) OF 33-218 IN COMPLEX WITH RNA AND DNA</scope>
    <scope>FUNCTION</scope>
    <scope>CATALYTIC ACTIVITY</scope>
    <scope>SUBUNIT</scope>
    <scope>MUTAGENESIS OF HIS-194 AND ASP-199</scope>
    <scope>METAL-BINDING SITES</scope>
    <scope>COFACTOR</scope>
    <scope>ACTIVE SITE</scope>
</reference>
<reference key="20">
    <citation type="journal article" date="2020" name="Nucleic Acids Res.">
        <title>Human REXO2 controls short mitochondrial RNAs generated by mtRNA processing and decay machinery to prevent accumulation of double-stranded RNA.</title>
        <authorList>
            <person name="Szewczyk M."/>
            <person name="Malik D."/>
            <person name="Borowski L.S."/>
            <person name="Czarnomska S.D."/>
            <person name="Kotrys A.V."/>
            <person name="Klosowska-Kosicka K."/>
            <person name="Nowotny M."/>
            <person name="Szczesny R.J."/>
        </authorList>
    </citation>
    <scope>X-RAY CRYSTALLOGRAPHY (3.15 ANGSTROMS) IN COMPLEX WITH RNA</scope>
    <scope>FUNCTION</scope>
    <scope>CATALYTIC ACTIVITY</scope>
    <scope>SUBCELLULAR LOCATION (ISOFORMS 1 AND 3)</scope>
    <scope>MUTAGENESIS OF ASP-49; LEU-53; TRP-96; GLU-146; ASP-147; TYR-164; TRP-179 AND PHE-215</scope>
</reference>
<sequence>MLGGSLGSRLLRGVGGSHGRFGARGVREGGAAMAAGESMAQRMVWVDLEMTGLDIEKDQIIEMACLITDSDLNILAEGPNLIIKQPDELLDSMSDWCKEHHGKSGLTKAVKESTITLQQAEYEFLSFVRQQTPPGLCPLAGNSVHEDKKFLDKYMPQFMKHLHYRIIDVSTVKELCRRWYPEEYEFAPKKAASHRALDDISESIKELQFYRNNIFKKKIDEKKRKIIENGENEKTVS</sequence>
<protein>
    <recommendedName>
        <fullName>Oligoribonuclease, mitochondrial</fullName>
        <ecNumber>3.1.15.-</ecNumber>
    </recommendedName>
    <alternativeName>
        <fullName>RNA exonuclease 2 homolog</fullName>
    </alternativeName>
    <alternativeName>
        <fullName>Small fragment nuclease</fullName>
    </alternativeName>
</protein>